<accession>A7GV58</accession>
<dbReference type="EC" id="7.1.2.2" evidence="1"/>
<dbReference type="EMBL" id="CP000764">
    <property type="protein sequence ID" value="ABS24016.1"/>
    <property type="molecule type" value="Genomic_DNA"/>
</dbReference>
<dbReference type="RefSeq" id="WP_012096274.1">
    <property type="nucleotide sequence ID" value="NC_009674.1"/>
</dbReference>
<dbReference type="SMR" id="A7GV58"/>
<dbReference type="STRING" id="315749.Bcer98_3827"/>
<dbReference type="GeneID" id="33899068"/>
<dbReference type="KEGG" id="bcy:Bcer98_3827"/>
<dbReference type="eggNOG" id="COG0056">
    <property type="taxonomic scope" value="Bacteria"/>
</dbReference>
<dbReference type="HOGENOM" id="CLU_010091_2_1_9"/>
<dbReference type="OrthoDB" id="9803053at2"/>
<dbReference type="Proteomes" id="UP000002300">
    <property type="component" value="Chromosome"/>
</dbReference>
<dbReference type="GO" id="GO:0005886">
    <property type="term" value="C:plasma membrane"/>
    <property type="evidence" value="ECO:0007669"/>
    <property type="project" value="UniProtKB-SubCell"/>
</dbReference>
<dbReference type="GO" id="GO:0045259">
    <property type="term" value="C:proton-transporting ATP synthase complex"/>
    <property type="evidence" value="ECO:0007669"/>
    <property type="project" value="UniProtKB-KW"/>
</dbReference>
<dbReference type="GO" id="GO:0043531">
    <property type="term" value="F:ADP binding"/>
    <property type="evidence" value="ECO:0007669"/>
    <property type="project" value="TreeGrafter"/>
</dbReference>
<dbReference type="GO" id="GO:0005524">
    <property type="term" value="F:ATP binding"/>
    <property type="evidence" value="ECO:0007669"/>
    <property type="project" value="UniProtKB-UniRule"/>
</dbReference>
<dbReference type="GO" id="GO:0046933">
    <property type="term" value="F:proton-transporting ATP synthase activity, rotational mechanism"/>
    <property type="evidence" value="ECO:0007669"/>
    <property type="project" value="UniProtKB-UniRule"/>
</dbReference>
<dbReference type="CDD" id="cd18113">
    <property type="entry name" value="ATP-synt_F1_alpha_C"/>
    <property type="match status" value="1"/>
</dbReference>
<dbReference type="CDD" id="cd18116">
    <property type="entry name" value="ATP-synt_F1_alpha_N"/>
    <property type="match status" value="1"/>
</dbReference>
<dbReference type="CDD" id="cd01132">
    <property type="entry name" value="F1-ATPase_alpha_CD"/>
    <property type="match status" value="1"/>
</dbReference>
<dbReference type="FunFam" id="1.20.150.20:FF:000001">
    <property type="entry name" value="ATP synthase subunit alpha"/>
    <property type="match status" value="1"/>
</dbReference>
<dbReference type="FunFam" id="2.40.30.20:FF:000001">
    <property type="entry name" value="ATP synthase subunit alpha"/>
    <property type="match status" value="1"/>
</dbReference>
<dbReference type="FunFam" id="3.40.50.300:FF:000002">
    <property type="entry name" value="ATP synthase subunit alpha"/>
    <property type="match status" value="1"/>
</dbReference>
<dbReference type="Gene3D" id="2.40.30.20">
    <property type="match status" value="1"/>
</dbReference>
<dbReference type="Gene3D" id="1.20.150.20">
    <property type="entry name" value="ATP synthase alpha/beta chain, C-terminal domain"/>
    <property type="match status" value="1"/>
</dbReference>
<dbReference type="Gene3D" id="3.40.50.300">
    <property type="entry name" value="P-loop containing nucleotide triphosphate hydrolases"/>
    <property type="match status" value="1"/>
</dbReference>
<dbReference type="HAMAP" id="MF_01346">
    <property type="entry name" value="ATP_synth_alpha_bact"/>
    <property type="match status" value="1"/>
</dbReference>
<dbReference type="InterPro" id="IPR023366">
    <property type="entry name" value="ATP_synth_asu-like_sf"/>
</dbReference>
<dbReference type="InterPro" id="IPR000793">
    <property type="entry name" value="ATP_synth_asu_C"/>
</dbReference>
<dbReference type="InterPro" id="IPR038376">
    <property type="entry name" value="ATP_synth_asu_C_sf"/>
</dbReference>
<dbReference type="InterPro" id="IPR033732">
    <property type="entry name" value="ATP_synth_F1_a_nt-bd_dom"/>
</dbReference>
<dbReference type="InterPro" id="IPR005294">
    <property type="entry name" value="ATP_synth_F1_asu"/>
</dbReference>
<dbReference type="InterPro" id="IPR020003">
    <property type="entry name" value="ATPase_a/bsu_AS"/>
</dbReference>
<dbReference type="InterPro" id="IPR004100">
    <property type="entry name" value="ATPase_F1/V1/A1_a/bsu_N"/>
</dbReference>
<dbReference type="InterPro" id="IPR036121">
    <property type="entry name" value="ATPase_F1/V1/A1_a/bsu_N_sf"/>
</dbReference>
<dbReference type="InterPro" id="IPR000194">
    <property type="entry name" value="ATPase_F1/V1/A1_a/bsu_nucl-bd"/>
</dbReference>
<dbReference type="InterPro" id="IPR027417">
    <property type="entry name" value="P-loop_NTPase"/>
</dbReference>
<dbReference type="NCBIfam" id="TIGR00962">
    <property type="entry name" value="atpA"/>
    <property type="match status" value="1"/>
</dbReference>
<dbReference type="NCBIfam" id="NF009884">
    <property type="entry name" value="PRK13343.1"/>
    <property type="match status" value="1"/>
</dbReference>
<dbReference type="PANTHER" id="PTHR48082">
    <property type="entry name" value="ATP SYNTHASE SUBUNIT ALPHA, MITOCHONDRIAL"/>
    <property type="match status" value="1"/>
</dbReference>
<dbReference type="PANTHER" id="PTHR48082:SF2">
    <property type="entry name" value="ATP SYNTHASE SUBUNIT ALPHA, MITOCHONDRIAL"/>
    <property type="match status" value="1"/>
</dbReference>
<dbReference type="Pfam" id="PF00006">
    <property type="entry name" value="ATP-synt_ab"/>
    <property type="match status" value="1"/>
</dbReference>
<dbReference type="Pfam" id="PF00306">
    <property type="entry name" value="ATP-synt_ab_C"/>
    <property type="match status" value="1"/>
</dbReference>
<dbReference type="Pfam" id="PF02874">
    <property type="entry name" value="ATP-synt_ab_N"/>
    <property type="match status" value="1"/>
</dbReference>
<dbReference type="PIRSF" id="PIRSF039088">
    <property type="entry name" value="F_ATPase_subunit_alpha"/>
    <property type="match status" value="1"/>
</dbReference>
<dbReference type="SUPFAM" id="SSF47917">
    <property type="entry name" value="C-terminal domain of alpha and beta subunits of F1 ATP synthase"/>
    <property type="match status" value="1"/>
</dbReference>
<dbReference type="SUPFAM" id="SSF50615">
    <property type="entry name" value="N-terminal domain of alpha and beta subunits of F1 ATP synthase"/>
    <property type="match status" value="1"/>
</dbReference>
<dbReference type="SUPFAM" id="SSF52540">
    <property type="entry name" value="P-loop containing nucleoside triphosphate hydrolases"/>
    <property type="match status" value="1"/>
</dbReference>
<dbReference type="PROSITE" id="PS00152">
    <property type="entry name" value="ATPASE_ALPHA_BETA"/>
    <property type="match status" value="1"/>
</dbReference>
<gene>
    <name evidence="1" type="primary">atpA</name>
    <name type="ordered locus">Bcer98_3827</name>
</gene>
<protein>
    <recommendedName>
        <fullName evidence="1">ATP synthase subunit alpha</fullName>
        <ecNumber evidence="1">7.1.2.2</ecNumber>
    </recommendedName>
    <alternativeName>
        <fullName evidence="1">ATP synthase F1 sector subunit alpha</fullName>
    </alternativeName>
    <alternativeName>
        <fullName evidence="1">F-ATPase subunit alpha</fullName>
    </alternativeName>
</protein>
<evidence type="ECO:0000255" key="1">
    <source>
        <dbReference type="HAMAP-Rule" id="MF_01346"/>
    </source>
</evidence>
<evidence type="ECO:0000256" key="2">
    <source>
        <dbReference type="SAM" id="MobiDB-lite"/>
    </source>
</evidence>
<proteinExistence type="inferred from homology"/>
<keyword id="KW-0066">ATP synthesis</keyword>
<keyword id="KW-0067">ATP-binding</keyword>
<keyword id="KW-1003">Cell membrane</keyword>
<keyword id="KW-0139">CF(1)</keyword>
<keyword id="KW-0375">Hydrogen ion transport</keyword>
<keyword id="KW-0406">Ion transport</keyword>
<keyword id="KW-0472">Membrane</keyword>
<keyword id="KW-0547">Nucleotide-binding</keyword>
<keyword id="KW-1278">Translocase</keyword>
<keyword id="KW-0813">Transport</keyword>
<reference key="1">
    <citation type="journal article" date="2008" name="Chem. Biol. Interact.">
        <title>Extending the Bacillus cereus group genomics to putative food-borne pathogens of different toxicity.</title>
        <authorList>
            <person name="Lapidus A."/>
            <person name="Goltsman E."/>
            <person name="Auger S."/>
            <person name="Galleron N."/>
            <person name="Segurens B."/>
            <person name="Dossat C."/>
            <person name="Land M.L."/>
            <person name="Broussolle V."/>
            <person name="Brillard J."/>
            <person name="Guinebretiere M.-H."/>
            <person name="Sanchis V."/>
            <person name="Nguen-the C."/>
            <person name="Lereclus D."/>
            <person name="Richardson P."/>
            <person name="Wincker P."/>
            <person name="Weissenbach J."/>
            <person name="Ehrlich S.D."/>
            <person name="Sorokin A."/>
        </authorList>
    </citation>
    <scope>NUCLEOTIDE SEQUENCE [LARGE SCALE GENOMIC DNA]</scope>
    <source>
        <strain>DSM 22905 / CIP 110041 / 391-98 / NVH 391-98</strain>
    </source>
</reference>
<name>ATPA_BACCN</name>
<organism>
    <name type="scientific">Bacillus cytotoxicus (strain DSM 22905 / CIP 110041 / 391-98 / NVH 391-98)</name>
    <dbReference type="NCBI Taxonomy" id="315749"/>
    <lineage>
        <taxon>Bacteria</taxon>
        <taxon>Bacillati</taxon>
        <taxon>Bacillota</taxon>
        <taxon>Bacilli</taxon>
        <taxon>Bacillales</taxon>
        <taxon>Bacillaceae</taxon>
        <taxon>Bacillus</taxon>
        <taxon>Bacillus cereus group</taxon>
    </lineage>
</organism>
<feature type="chain" id="PRO_1000086865" description="ATP synthase subunit alpha">
    <location>
        <begin position="1"/>
        <end position="502"/>
    </location>
</feature>
<feature type="region of interest" description="Disordered" evidence="2">
    <location>
        <begin position="115"/>
        <end position="136"/>
    </location>
</feature>
<feature type="binding site" evidence="1">
    <location>
        <begin position="169"/>
        <end position="176"/>
    </location>
    <ligand>
        <name>ATP</name>
        <dbReference type="ChEBI" id="CHEBI:30616"/>
    </ligand>
</feature>
<feature type="site" description="Required for activity" evidence="1">
    <location>
        <position position="362"/>
    </location>
</feature>
<sequence>MSIRAEEISALIKQQIENYQSEIEVSDVGTVIQVGDGIARAHGLDNVMAGELVEFANGVMGLAQNLEENNVGIIILGPYTEIREGDEVRRTGRIMQVPVGEELIGRVVNPLGQPVDGLGPIHTTKTRPIESPAPGVMDRKSVHEPLQTGIKAIDALVPIGRGQRELIIGDRQTGKTAVALDTILNQKDEDMICIYVAIGQKESTVRNVVETLRKHGALEYTIVVTASASQPAPLLYLAPYAGVSMGEEFMYNGKHVLVVYDDLSKQAAAYRELSLLLRRPPGREAYPGDVFYLHSRLLERAAKLSDAKGGGSLTALPFIETQAGDVSAYIPTNVISITDGQIFLQSDLFFSGVRPAIDAGTSVSRVGGSAQIKAMSKVSGTLRLDLASYRELEAFAQFGSDLDKATQAKLNRGARTVEVLKQGLHKPLRVEKQVMILYALTRGFLDDIPVADITRFEEEFYAWLDSNAADLLEEIRTTKKLADDDKFAAAINGFKKVFVASE</sequence>
<comment type="function">
    <text evidence="1">Produces ATP from ADP in the presence of a proton gradient across the membrane. The alpha chain is a regulatory subunit.</text>
</comment>
<comment type="catalytic activity">
    <reaction evidence="1">
        <text>ATP + H2O + 4 H(+)(in) = ADP + phosphate + 5 H(+)(out)</text>
        <dbReference type="Rhea" id="RHEA:57720"/>
        <dbReference type="ChEBI" id="CHEBI:15377"/>
        <dbReference type="ChEBI" id="CHEBI:15378"/>
        <dbReference type="ChEBI" id="CHEBI:30616"/>
        <dbReference type="ChEBI" id="CHEBI:43474"/>
        <dbReference type="ChEBI" id="CHEBI:456216"/>
        <dbReference type="EC" id="7.1.2.2"/>
    </reaction>
</comment>
<comment type="subunit">
    <text evidence="1">F-type ATPases have 2 components, CF(1) - the catalytic core - and CF(0) - the membrane proton channel. CF(1) has five subunits: alpha(3), beta(3), gamma(1), delta(1), epsilon(1). CF(0) has three main subunits: a(1), b(2) and c(9-12). The alpha and beta chains form an alternating ring which encloses part of the gamma chain. CF(1) is attached to CF(0) by a central stalk formed by the gamma and epsilon chains, while a peripheral stalk is formed by the delta and b chains.</text>
</comment>
<comment type="subcellular location">
    <subcellularLocation>
        <location evidence="1">Cell membrane</location>
        <topology evidence="1">Peripheral membrane protein</topology>
    </subcellularLocation>
</comment>
<comment type="similarity">
    <text evidence="1">Belongs to the ATPase alpha/beta chains family.</text>
</comment>